<accession>C1EWG6</accession>
<evidence type="ECO:0000255" key="1">
    <source>
        <dbReference type="HAMAP-Rule" id="MF_00375"/>
    </source>
</evidence>
<reference key="1">
    <citation type="submission" date="2009-02" db="EMBL/GenBank/DDBJ databases">
        <title>Genome sequence of Bacillus cereus 03BB102.</title>
        <authorList>
            <person name="Dodson R.J."/>
            <person name="Jackson P."/>
            <person name="Munk A.C."/>
            <person name="Brettin T."/>
            <person name="Bruce D."/>
            <person name="Detter C."/>
            <person name="Tapia R."/>
            <person name="Han C."/>
            <person name="Sutton G."/>
            <person name="Sims D."/>
        </authorList>
    </citation>
    <scope>NUCLEOTIDE SEQUENCE [LARGE SCALE GENOMIC DNA]</scope>
    <source>
        <strain>03BB102</strain>
    </source>
</reference>
<gene>
    <name evidence="1" type="primary">hemL1</name>
    <name type="ordered locus">BCA_0550</name>
</gene>
<sequence length="434" mass="46448">MVVKFTKSEALHKEALEHIVGGVNSPSRSFKAVGGGAPVAMERGKGAYFWDVDGNKYIDYLAAYGPIITGHAHPHITKAITTAAENGVLYGTPTALEVKFAKMLKEAMPALDKVRFVNSGTEAVMTTIRVARAYTGRTKIMKFAGCYHGHSDLVLVAAGSGPSTLGTPDSAGVPQSIAQEVITVPFNNVETLKEALDKWGHEVAAILVEPIVGNFGIVEPKPGFLEKVNELVHEAGALVIYDEVITAFRFMYGGAQDLLGVTPDLTALGKVIGGGLPIGAYGGKKEIMEQVAPLGPAYQAGTMAGNPASMASGIACLEVLQQEGLYEKLDELGAMLEKGILEQAAKHNIDITLNRLKGALTVYFTTNTIEDYDAAQDTDGEMFGKFFKLMLQEGVNLAPSKYEAWFLTTEHTKEDIEYTIEAVGRAFATLADNK</sequence>
<name>GSA1_BACC3</name>
<dbReference type="EC" id="5.4.3.8" evidence="1"/>
<dbReference type="EMBL" id="CP001407">
    <property type="protein sequence ID" value="ACO28629.1"/>
    <property type="molecule type" value="Genomic_DNA"/>
</dbReference>
<dbReference type="SMR" id="C1EWG6"/>
<dbReference type="KEGG" id="bcx:BCA_0550"/>
<dbReference type="UniPathway" id="UPA00251">
    <property type="reaction ID" value="UER00317"/>
</dbReference>
<dbReference type="Proteomes" id="UP000002210">
    <property type="component" value="Chromosome"/>
</dbReference>
<dbReference type="GO" id="GO:0005737">
    <property type="term" value="C:cytoplasm"/>
    <property type="evidence" value="ECO:0007669"/>
    <property type="project" value="UniProtKB-SubCell"/>
</dbReference>
<dbReference type="GO" id="GO:0042286">
    <property type="term" value="F:glutamate-1-semialdehyde 2,1-aminomutase activity"/>
    <property type="evidence" value="ECO:0007669"/>
    <property type="project" value="UniProtKB-UniRule"/>
</dbReference>
<dbReference type="GO" id="GO:0030170">
    <property type="term" value="F:pyridoxal phosphate binding"/>
    <property type="evidence" value="ECO:0007669"/>
    <property type="project" value="InterPro"/>
</dbReference>
<dbReference type="GO" id="GO:0008483">
    <property type="term" value="F:transaminase activity"/>
    <property type="evidence" value="ECO:0007669"/>
    <property type="project" value="InterPro"/>
</dbReference>
<dbReference type="GO" id="GO:0006782">
    <property type="term" value="P:protoporphyrinogen IX biosynthetic process"/>
    <property type="evidence" value="ECO:0007669"/>
    <property type="project" value="UniProtKB-UniRule"/>
</dbReference>
<dbReference type="CDD" id="cd00610">
    <property type="entry name" value="OAT_like"/>
    <property type="match status" value="1"/>
</dbReference>
<dbReference type="FunFam" id="3.40.640.10:FF:000021">
    <property type="entry name" value="Glutamate-1-semialdehyde 2,1-aminomutase"/>
    <property type="match status" value="1"/>
</dbReference>
<dbReference type="Gene3D" id="3.90.1150.10">
    <property type="entry name" value="Aspartate Aminotransferase, domain 1"/>
    <property type="match status" value="1"/>
</dbReference>
<dbReference type="Gene3D" id="3.40.640.10">
    <property type="entry name" value="Type I PLP-dependent aspartate aminotransferase-like (Major domain)"/>
    <property type="match status" value="1"/>
</dbReference>
<dbReference type="HAMAP" id="MF_00375">
    <property type="entry name" value="HemL_aminotrans_3"/>
    <property type="match status" value="1"/>
</dbReference>
<dbReference type="InterPro" id="IPR004639">
    <property type="entry name" value="4pyrrol_synth_GluAld_NH2Trfase"/>
</dbReference>
<dbReference type="InterPro" id="IPR005814">
    <property type="entry name" value="Aminotrans_3"/>
</dbReference>
<dbReference type="InterPro" id="IPR049704">
    <property type="entry name" value="Aminotrans_3_PPA_site"/>
</dbReference>
<dbReference type="InterPro" id="IPR015424">
    <property type="entry name" value="PyrdxlP-dep_Trfase"/>
</dbReference>
<dbReference type="InterPro" id="IPR015421">
    <property type="entry name" value="PyrdxlP-dep_Trfase_major"/>
</dbReference>
<dbReference type="InterPro" id="IPR015422">
    <property type="entry name" value="PyrdxlP-dep_Trfase_small"/>
</dbReference>
<dbReference type="NCBIfam" id="TIGR00713">
    <property type="entry name" value="hemL"/>
    <property type="match status" value="1"/>
</dbReference>
<dbReference type="NCBIfam" id="NF000818">
    <property type="entry name" value="PRK00062.1"/>
    <property type="match status" value="1"/>
</dbReference>
<dbReference type="NCBIfam" id="NF009055">
    <property type="entry name" value="PRK12389.1"/>
    <property type="match status" value="1"/>
</dbReference>
<dbReference type="PANTHER" id="PTHR43713">
    <property type="entry name" value="GLUTAMATE-1-SEMIALDEHYDE 2,1-AMINOMUTASE"/>
    <property type="match status" value="1"/>
</dbReference>
<dbReference type="PANTHER" id="PTHR43713:SF1">
    <property type="entry name" value="GLUTAMATE-1-SEMIALDEHYDE 2,1-AMINOMUTASE 2"/>
    <property type="match status" value="1"/>
</dbReference>
<dbReference type="Pfam" id="PF00202">
    <property type="entry name" value="Aminotran_3"/>
    <property type="match status" value="1"/>
</dbReference>
<dbReference type="SUPFAM" id="SSF53383">
    <property type="entry name" value="PLP-dependent transferases"/>
    <property type="match status" value="1"/>
</dbReference>
<dbReference type="PROSITE" id="PS00600">
    <property type="entry name" value="AA_TRANSFER_CLASS_3"/>
    <property type="match status" value="1"/>
</dbReference>
<proteinExistence type="inferred from homology"/>
<protein>
    <recommendedName>
        <fullName evidence="1">Glutamate-1-semialdehyde 2,1-aminomutase 1</fullName>
        <shortName evidence="1">GSA 1</shortName>
        <ecNumber evidence="1">5.4.3.8</ecNumber>
    </recommendedName>
    <alternativeName>
        <fullName evidence="1">Glutamate-1-semialdehyde aminotransferase 1</fullName>
        <shortName evidence="1">GSA-AT 1</shortName>
    </alternativeName>
</protein>
<comment type="catalytic activity">
    <reaction evidence="1">
        <text>(S)-4-amino-5-oxopentanoate = 5-aminolevulinate</text>
        <dbReference type="Rhea" id="RHEA:14265"/>
        <dbReference type="ChEBI" id="CHEBI:57501"/>
        <dbReference type="ChEBI" id="CHEBI:356416"/>
        <dbReference type="EC" id="5.4.3.8"/>
    </reaction>
</comment>
<comment type="cofactor">
    <cofactor evidence="1">
        <name>pyridoxal 5'-phosphate</name>
        <dbReference type="ChEBI" id="CHEBI:597326"/>
    </cofactor>
</comment>
<comment type="pathway">
    <text evidence="1">Porphyrin-containing compound metabolism; protoporphyrin-IX biosynthesis; 5-aminolevulinate from L-glutamyl-tRNA(Glu): step 2/2.</text>
</comment>
<comment type="subunit">
    <text evidence="1">Homodimer.</text>
</comment>
<comment type="subcellular location">
    <subcellularLocation>
        <location evidence="1">Cytoplasm</location>
    </subcellularLocation>
</comment>
<comment type="similarity">
    <text evidence="1">Belongs to the class-III pyridoxal-phosphate-dependent aminotransferase family. HemL subfamily.</text>
</comment>
<keyword id="KW-0963">Cytoplasm</keyword>
<keyword id="KW-0413">Isomerase</keyword>
<keyword id="KW-0627">Porphyrin biosynthesis</keyword>
<keyword id="KW-0663">Pyridoxal phosphate</keyword>
<feature type="chain" id="PRO_0000382263" description="Glutamate-1-semialdehyde 2,1-aminomutase 1">
    <location>
        <begin position="1"/>
        <end position="434"/>
    </location>
</feature>
<feature type="modified residue" description="N6-(pyridoxal phosphate)lysine" evidence="1">
    <location>
        <position position="270"/>
    </location>
</feature>
<organism>
    <name type="scientific">Bacillus cereus (strain 03BB102)</name>
    <dbReference type="NCBI Taxonomy" id="572264"/>
    <lineage>
        <taxon>Bacteria</taxon>
        <taxon>Bacillati</taxon>
        <taxon>Bacillota</taxon>
        <taxon>Bacilli</taxon>
        <taxon>Bacillales</taxon>
        <taxon>Bacillaceae</taxon>
        <taxon>Bacillus</taxon>
        <taxon>Bacillus cereus group</taxon>
    </lineage>
</organism>